<name>FUT2_BOVIN</name>
<keyword id="KW-0325">Glycoprotein</keyword>
<keyword id="KW-0328">Glycosyltransferase</keyword>
<keyword id="KW-0333">Golgi apparatus</keyword>
<keyword id="KW-0443">Lipid metabolism</keyword>
<keyword id="KW-0472">Membrane</keyword>
<keyword id="KW-1185">Reference proteome</keyword>
<keyword id="KW-0735">Signal-anchor</keyword>
<keyword id="KW-0808">Transferase</keyword>
<keyword id="KW-0812">Transmembrane</keyword>
<keyword id="KW-1133">Transmembrane helix</keyword>
<proteinExistence type="evidence at protein level"/>
<comment type="function">
    <text evidence="4 6 7">Catalyzes the transfer of L-fucose, from a guanosine diphosphate-beta-L-fucose, to the terminal galactose on both O- and N-linked glycans chains of cell surface glycoproteins and glycolipids and the resulting epitope regulates several processes such as cell-cell interaction including host-microbe interaction, cell surface expression and cell proliferation (PubMed:10814703). Preferentially fucosylates gangliosides GA1 and GM1 in the antrum, cecum and colon and in the female reproductive organs. Fucosylated host glycoproteins or glycolipids mediate interaction with intestinal microbiota influencing its composition (By similarity). Creates a soluble precursor oligosaccharide FuC-alpha ((1,2)Galbeta-) called the H antigen which is an essential substrate for the final step in the soluble ABO blood group antigen synthesis pathway (PubMed:20506485).</text>
</comment>
<comment type="catalytic activity">
    <reaction evidence="4">
        <text>a beta-D-galactosyl-(1-&gt;3)-N-acetyl-beta-D-glucosaminyl derivative + GDP-beta-L-fucose = an alpha-L-Fuc-(1-&gt;2)-beta-D-Gal-(1-&gt;3)-beta-D-GlcNAc derivative + GDP + H(+)</text>
        <dbReference type="Rhea" id="RHEA:50664"/>
        <dbReference type="ChEBI" id="CHEBI:15378"/>
        <dbReference type="ChEBI" id="CHEBI:57273"/>
        <dbReference type="ChEBI" id="CHEBI:58189"/>
        <dbReference type="ChEBI" id="CHEBI:133506"/>
        <dbReference type="ChEBI" id="CHEBI:133509"/>
        <dbReference type="EC" id="2.4.1.69"/>
    </reaction>
    <physiologicalReaction direction="left-to-right" evidence="4">
        <dbReference type="Rhea" id="RHEA:50665"/>
    </physiologicalReaction>
</comment>
<comment type="catalytic activity">
    <reaction evidence="4">
        <text>a beta-D-galactosyl-(1-&gt;4)-N-acetyl-beta-D-glucosaminyl derivative + GDP-beta-L-fucose = an alpha-L-Fuc-(1-&gt;2)-beta-D-Gal-(1-&gt;4)-beta-D-GlcNAc derivative + GDP + H(+)</text>
        <dbReference type="Rhea" id="RHEA:50668"/>
        <dbReference type="ChEBI" id="CHEBI:15378"/>
        <dbReference type="ChEBI" id="CHEBI:57273"/>
        <dbReference type="ChEBI" id="CHEBI:58189"/>
        <dbReference type="ChEBI" id="CHEBI:133507"/>
        <dbReference type="ChEBI" id="CHEBI:133510"/>
        <dbReference type="EC" id="2.4.1.344"/>
    </reaction>
    <physiologicalReaction direction="left-to-right" evidence="4">
        <dbReference type="Rhea" id="RHEA:50669"/>
    </physiologicalReaction>
</comment>
<comment type="catalytic activity">
    <reaction evidence="6">
        <text>a ganglioside GM1 + GDP-beta-L-fucose = a ganglioside Fuc-GM1 + GDP + H(+)</text>
        <dbReference type="Rhea" id="RHEA:48292"/>
        <dbReference type="ChEBI" id="CHEBI:15378"/>
        <dbReference type="ChEBI" id="CHEBI:57273"/>
        <dbReference type="ChEBI" id="CHEBI:58189"/>
        <dbReference type="ChEBI" id="CHEBI:82639"/>
        <dbReference type="ChEBI" id="CHEBI:90189"/>
    </reaction>
    <physiologicalReaction direction="left-to-right" evidence="9">
        <dbReference type="Rhea" id="RHEA:48293"/>
    </physiologicalReaction>
</comment>
<comment type="catalytic activity">
    <reaction evidence="4">
        <text>a neolactoside nLc4Cer + GDP-beta-L-fucose = a neolactoside IV(2)-alpha-Fuc-nLc4Cer + GDP + H(+)</text>
        <dbReference type="Rhea" id="RHEA:48800"/>
        <dbReference type="ChEBI" id="CHEBI:15378"/>
        <dbReference type="ChEBI" id="CHEBI:57273"/>
        <dbReference type="ChEBI" id="CHEBI:58189"/>
        <dbReference type="ChEBI" id="CHEBI:90376"/>
        <dbReference type="ChEBI" id="CHEBI:90803"/>
    </reaction>
    <physiologicalReaction direction="left-to-right" evidence="4">
        <dbReference type="Rhea" id="RHEA:48801"/>
    </physiologicalReaction>
</comment>
<comment type="catalytic activity">
    <reaction evidence="4">
        <text>a neolactoside nLc4Cer(d18:1(4E)) + GDP-beta-L-fucose = a neolactoside IV(2)-alpha-Fuc-nLc4Cer(d18:1(4E)) + GDP + H(+)</text>
        <dbReference type="Rhea" id="RHEA:48304"/>
        <dbReference type="ChEBI" id="CHEBI:15378"/>
        <dbReference type="ChEBI" id="CHEBI:17006"/>
        <dbReference type="ChEBI" id="CHEBI:28691"/>
        <dbReference type="ChEBI" id="CHEBI:57273"/>
        <dbReference type="ChEBI" id="CHEBI:58189"/>
    </reaction>
    <physiologicalReaction direction="left-to-right" evidence="4">
        <dbReference type="Rhea" id="RHEA:48305"/>
    </physiologicalReaction>
</comment>
<comment type="catalytic activity">
    <reaction evidence="4">
        <text>a ganglioside GA1 + GDP-beta-L-fucose = a ganglioside Fuc-GA1 + GDP + H(+)</text>
        <dbReference type="Rhea" id="RHEA:48320"/>
        <dbReference type="ChEBI" id="CHEBI:15378"/>
        <dbReference type="ChEBI" id="CHEBI:57273"/>
        <dbReference type="ChEBI" id="CHEBI:58189"/>
        <dbReference type="ChEBI" id="CHEBI:88069"/>
        <dbReference type="ChEBI" id="CHEBI:90262"/>
    </reaction>
    <physiologicalReaction direction="left-to-right" evidence="4">
        <dbReference type="Rhea" id="RHEA:48321"/>
    </physiologicalReaction>
</comment>
<comment type="catalytic activity">
    <reaction evidence="4">
        <text>Lc4Cer + GDP-beta-L-fucose = alpha-L-fucosyl-(1-&gt;2)-beta-D-galactosyl-(1-&gt;3)-N-acetyl-beta-D-glucosaminyl-(1-&gt;3)-beta-D-galactosyl-(1-&gt;4)-beta-D-glucosyl-(1&lt;-&gt;1')-ceramide + GDP + H(+)</text>
        <dbReference type="Rhea" id="RHEA:48792"/>
        <dbReference type="ChEBI" id="CHEBI:15378"/>
        <dbReference type="ChEBI" id="CHEBI:57273"/>
        <dbReference type="ChEBI" id="CHEBI:58189"/>
        <dbReference type="ChEBI" id="CHEBI:90800"/>
        <dbReference type="ChEBI" id="CHEBI:90802"/>
    </reaction>
    <physiologicalReaction direction="left-to-right" evidence="4">
        <dbReference type="Rhea" id="RHEA:48793"/>
    </physiologicalReaction>
</comment>
<comment type="catalytic activity">
    <reaction evidence="4">
        <text>a beta-D-Gal-(1-&gt;3)-beta-D-GlcNAc-(1-&gt;3)-beta-D-Gal-(1-&gt;4)-beta-D-Glc-(1&lt;-&gt;1')-Cer(d18:1(4E)) + GDP-beta-L-fucose = alpha-L-fucosyl-(1-&gt;2)- beta-D-galactosyl-(1-&gt;3)-N-acetyl-beta-D-glucosaminyl-(1-&gt;3)-beta-D-galactosyl-(1-&gt;4)-beta-D-glucosyl-(1&lt;-&gt;1')-N-acylsphing-4-enine + GDP + H(+)</text>
        <dbReference type="Rhea" id="RHEA:32175"/>
        <dbReference type="ChEBI" id="CHEBI:15378"/>
        <dbReference type="ChEBI" id="CHEBI:17292"/>
        <dbReference type="ChEBI" id="CHEBI:28743"/>
        <dbReference type="ChEBI" id="CHEBI:57273"/>
        <dbReference type="ChEBI" id="CHEBI:58189"/>
        <dbReference type="EC" id="2.4.1.69"/>
    </reaction>
    <physiologicalReaction direction="left-to-right" evidence="4">
        <dbReference type="Rhea" id="RHEA:32176"/>
    </physiologicalReaction>
</comment>
<comment type="catalytic activity">
    <reaction evidence="4">
        <text>a ganglioside GD1b + GDP-beta-L-fucose = a ganglioside Fuc-GD1b + GDP + H(+)</text>
        <dbReference type="Rhea" id="RHEA:48324"/>
        <dbReference type="ChEBI" id="CHEBI:15378"/>
        <dbReference type="ChEBI" id="CHEBI:57273"/>
        <dbReference type="ChEBI" id="CHEBI:58189"/>
        <dbReference type="ChEBI" id="CHEBI:82939"/>
        <dbReference type="ChEBI" id="CHEBI:90265"/>
    </reaction>
    <physiologicalReaction direction="left-to-right" evidence="4">
        <dbReference type="Rhea" id="RHEA:48325"/>
    </physiologicalReaction>
</comment>
<comment type="catalytic activity">
    <reaction evidence="3">
        <text>a ganglioside GM1 (d18:1(4E)) + GDP-beta-L-fucose = a ganglioside Fuc-GM1 (d18:1(4E)) + GDP + H(+)</text>
        <dbReference type="Rhea" id="RHEA:42040"/>
        <dbReference type="ChEBI" id="CHEBI:15378"/>
        <dbReference type="ChEBI" id="CHEBI:57273"/>
        <dbReference type="ChEBI" id="CHEBI:58189"/>
        <dbReference type="ChEBI" id="CHEBI:77709"/>
        <dbReference type="ChEBI" id="CHEBI:78607"/>
    </reaction>
    <physiologicalReaction direction="left-to-right" evidence="3">
        <dbReference type="Rhea" id="RHEA:42041"/>
    </physiologicalReaction>
</comment>
<comment type="catalytic activity">
    <reaction evidence="3">
        <text>a globoside GalGb4Cer (d18:1(4E)) + GDP-beta-L-fucose = a globoside Globo-H (d18:1(4E)) + GDP + H(+)</text>
        <dbReference type="Rhea" id="RHEA:42044"/>
        <dbReference type="ChEBI" id="CHEBI:15378"/>
        <dbReference type="ChEBI" id="CHEBI:57273"/>
        <dbReference type="ChEBI" id="CHEBI:58189"/>
        <dbReference type="ChEBI" id="CHEBI:62571"/>
        <dbReference type="ChEBI" id="CHEBI:62649"/>
    </reaction>
    <physiologicalReaction direction="left-to-right" evidence="3">
        <dbReference type="Rhea" id="RHEA:42045"/>
    </physiologicalReaction>
</comment>
<comment type="catalytic activity">
    <reaction evidence="4">
        <text>a lactoside III(4)-a-Fuc-Lc4Cer + GDP-beta-L-fucose = a lactoside IV(2),III(4)-a-[Fuc]2-Lc4Cer + GDP + H(+)</text>
        <dbReference type="Rhea" id="RHEA:62616"/>
        <dbReference type="ChEBI" id="CHEBI:15378"/>
        <dbReference type="ChEBI" id="CHEBI:57273"/>
        <dbReference type="ChEBI" id="CHEBI:58189"/>
        <dbReference type="ChEBI" id="CHEBI:90811"/>
        <dbReference type="ChEBI" id="CHEBI:142612"/>
    </reaction>
    <physiologicalReaction direction="left-to-right" evidence="4">
        <dbReference type="Rhea" id="RHEA:62617"/>
    </physiologicalReaction>
</comment>
<comment type="catalytic activity">
    <reaction evidence="6">
        <text>beta-D-galactosyl-(1-&gt;3)-N-acetyl-D-galactosamine + GDP-beta-L-fucose = alpha-L-fucosyl-(1-&gt;2)-beta-D-galactosyl-(1-&gt;3)-N-acetyl-D-galactosamine + GDP + H(+)</text>
        <dbReference type="Rhea" id="RHEA:62964"/>
        <dbReference type="ChEBI" id="CHEBI:15378"/>
        <dbReference type="ChEBI" id="CHEBI:57273"/>
        <dbReference type="ChEBI" id="CHEBI:58189"/>
        <dbReference type="ChEBI" id="CHEBI:84728"/>
        <dbReference type="ChEBI" id="CHEBI:546807"/>
    </reaction>
    <physiologicalReaction direction="left-to-right" evidence="9">
        <dbReference type="Rhea" id="RHEA:62965"/>
    </physiologicalReaction>
</comment>
<comment type="biophysicochemical properties">
    <kinetics>
        <KM evidence="6">0.38 uM for galacto-N-biose</KM>
        <KM evidence="6">1.42 uM for GM1</KM>
        <Vmax evidence="6">15.6 pmol/min/mg enzyme towards galacto-N-biose</Vmax>
        <Vmax evidence="6">31.1 pmol/min/mg enzyme towards GM1</Vmax>
    </kinetics>
</comment>
<comment type="pathway">
    <text evidence="4">Protein modification; protein glycosylation.</text>
</comment>
<comment type="subcellular location">
    <subcellularLocation>
        <location evidence="1">Golgi apparatus</location>
        <location evidence="1">Golgi stack membrane</location>
        <topology evidence="1">Single-pass type II membrane protein</topology>
    </subcellularLocation>
    <text evidence="1">Membrane-bound form in trans cisternae of Golgi.</text>
</comment>
<comment type="tissue specificity">
    <text evidence="6">Expressed in brain, heart, lung, intestin and kidney.</text>
</comment>
<organism>
    <name type="scientific">Bos taurus</name>
    <name type="common">Bovine</name>
    <dbReference type="NCBI Taxonomy" id="9913"/>
    <lineage>
        <taxon>Eukaryota</taxon>
        <taxon>Metazoa</taxon>
        <taxon>Chordata</taxon>
        <taxon>Craniata</taxon>
        <taxon>Vertebrata</taxon>
        <taxon>Euteleostomi</taxon>
        <taxon>Mammalia</taxon>
        <taxon>Eutheria</taxon>
        <taxon>Laurasiatheria</taxon>
        <taxon>Artiodactyla</taxon>
        <taxon>Ruminantia</taxon>
        <taxon>Pecora</taxon>
        <taxon>Bovidae</taxon>
        <taxon>Bovinae</taxon>
        <taxon>Bos</taxon>
    </lineage>
</organism>
<sequence length="344" mass="39320">MFSTQTFFFFPTAPFILFVFTASTIFHLHQRLEKMQPTWELEALEPATMETPSRPQPRPQLKGMWTINAIGRLGNQMGEYATLYALAKMNGRAAFIPPQMHSTLAPIFRITLPVLHDATARSVPWQNYHLNDWMEEQYRHIPGEYVRLTGYPCSWTFYHHLRAEILQEFTLHAHVREEAQNFLRGLRVNGSRPSTYVGVHVRRGDYVHVMPNVWKGVVADRRYLEQALDWFRARYSAPIFVVSSNGMAWCRENINASRGDVVFAGNGNEGSPAKDFALLTQCNHTIMTIGTFGIWAAYLAGGETIYLANYTLPDSPFLKIFKPEAAFLPKWIGIPADLSPLLKH</sequence>
<evidence type="ECO:0000250" key="1"/>
<evidence type="ECO:0000250" key="2">
    <source>
        <dbReference type="UniProtKB" id="Q10981"/>
    </source>
</evidence>
<evidence type="ECO:0000250" key="3">
    <source>
        <dbReference type="UniProtKB" id="Q10984"/>
    </source>
</evidence>
<evidence type="ECO:0000250" key="4">
    <source>
        <dbReference type="UniProtKB" id="Q9JL27"/>
    </source>
</evidence>
<evidence type="ECO:0000255" key="5"/>
<evidence type="ECO:0000269" key="6">
    <source>
    </source>
</evidence>
<evidence type="ECO:0000269" key="7">
    <source>
    </source>
</evidence>
<evidence type="ECO:0000303" key="8">
    <source>
    </source>
</evidence>
<evidence type="ECO:0000305" key="9">
    <source>
    </source>
</evidence>
<dbReference type="EC" id="2.4.1.69" evidence="4"/>
<dbReference type="EC" id="2.4.1.344" evidence="4"/>
<dbReference type="EMBL" id="X99620">
    <property type="protein sequence ID" value="CAA67931.1"/>
    <property type="molecule type" value="Genomic_DNA"/>
</dbReference>
<dbReference type="RefSeq" id="NP_803466.1">
    <property type="nucleotide sequence ID" value="NM_177500.1"/>
</dbReference>
<dbReference type="FunCoup" id="Q28113">
    <property type="interactions" value="4"/>
</dbReference>
<dbReference type="STRING" id="9913.ENSBTAP00000028720"/>
<dbReference type="SwissLipids" id="SLP:000001422"/>
<dbReference type="CAZy" id="GT11">
    <property type="family name" value="Glycosyltransferase Family 11"/>
</dbReference>
<dbReference type="GlyCosmos" id="Q28113">
    <property type="glycosylation" value="4 sites, No reported glycans"/>
</dbReference>
<dbReference type="GlyGen" id="Q28113">
    <property type="glycosylation" value="4 sites"/>
</dbReference>
<dbReference type="PaxDb" id="9913-ENSBTAP00000028720"/>
<dbReference type="GeneID" id="281175"/>
<dbReference type="KEGG" id="bta:281175"/>
<dbReference type="CTD" id="2524"/>
<dbReference type="eggNOG" id="ENOG502S316">
    <property type="taxonomic scope" value="Eukaryota"/>
</dbReference>
<dbReference type="InParanoid" id="Q28113"/>
<dbReference type="OrthoDB" id="3226at2759"/>
<dbReference type="BRENDA" id="2.4.1.69">
    <property type="organism ID" value="908"/>
</dbReference>
<dbReference type="UniPathway" id="UPA00378"/>
<dbReference type="Proteomes" id="UP000009136">
    <property type="component" value="Unplaced"/>
</dbReference>
<dbReference type="GO" id="GO:0032580">
    <property type="term" value="C:Golgi cisterna membrane"/>
    <property type="evidence" value="ECO:0007669"/>
    <property type="project" value="UniProtKB-SubCell"/>
</dbReference>
<dbReference type="GO" id="GO:0031127">
    <property type="term" value="F:alpha-(1,2)-fucosyltransferase activity"/>
    <property type="evidence" value="ECO:0000314"/>
    <property type="project" value="UniProtKB"/>
</dbReference>
<dbReference type="GO" id="GO:0008107">
    <property type="term" value="F:galactoside 2-alpha-L-fucosyltransferase activity"/>
    <property type="evidence" value="ECO:0000318"/>
    <property type="project" value="GO_Central"/>
</dbReference>
<dbReference type="GO" id="GO:0005975">
    <property type="term" value="P:carbohydrate metabolic process"/>
    <property type="evidence" value="ECO:0007669"/>
    <property type="project" value="InterPro"/>
</dbReference>
<dbReference type="GO" id="GO:0036065">
    <property type="term" value="P:fucosylation"/>
    <property type="evidence" value="ECO:0000314"/>
    <property type="project" value="UniProtKB"/>
</dbReference>
<dbReference type="GO" id="GO:0006664">
    <property type="term" value="P:glycolipid metabolic process"/>
    <property type="evidence" value="ECO:0000250"/>
    <property type="project" value="UniProtKB"/>
</dbReference>
<dbReference type="GO" id="GO:0006486">
    <property type="term" value="P:protein glycosylation"/>
    <property type="evidence" value="ECO:0000318"/>
    <property type="project" value="GO_Central"/>
</dbReference>
<dbReference type="GO" id="GO:0030155">
    <property type="term" value="P:regulation of cell adhesion"/>
    <property type="evidence" value="ECO:0000314"/>
    <property type="project" value="UniProtKB"/>
</dbReference>
<dbReference type="GO" id="GO:0001936">
    <property type="term" value="P:regulation of endothelial cell proliferation"/>
    <property type="evidence" value="ECO:0000315"/>
    <property type="project" value="UniProtKB"/>
</dbReference>
<dbReference type="CDD" id="cd11301">
    <property type="entry name" value="Fut1_Fut2_like"/>
    <property type="match status" value="1"/>
</dbReference>
<dbReference type="InterPro" id="IPR002516">
    <property type="entry name" value="Glyco_trans_11"/>
</dbReference>
<dbReference type="PANTHER" id="PTHR11927">
    <property type="entry name" value="GALACTOSIDE 2-L-FUCOSYLTRANSFERASE"/>
    <property type="match status" value="1"/>
</dbReference>
<dbReference type="PANTHER" id="PTHR11927:SF2">
    <property type="entry name" value="GALACTOSIDE ALPHA-(1,2)-FUCOSYLTRANSFERASE 2"/>
    <property type="match status" value="1"/>
</dbReference>
<dbReference type="Pfam" id="PF01531">
    <property type="entry name" value="Glyco_transf_11"/>
    <property type="match status" value="1"/>
</dbReference>
<reference key="1">
    <citation type="submission" date="1997-10" db="EMBL/GenBank/DDBJ databases">
        <authorList>
            <person name="Petit J.-M."/>
        </authorList>
    </citation>
    <scope>NUCLEOTIDE SEQUENCE [GENOMIC DNA]</scope>
</reference>
<reference key="2">
    <citation type="journal article" date="2000" name="Glycobiology">
        <title>Three bovine alpha2-fucosyltransferase genes encode enzymes that preferentially transfer fucose on Galbeta1-3GalNAc acceptor substrates.</title>
        <authorList>
            <person name="Barreaud J.P."/>
            <person name="Saunier K."/>
            <person name="Souchaire J."/>
            <person name="Delourme D."/>
            <person name="Oulmouden A."/>
            <person name="Oriol R."/>
            <person name="Leveziel H."/>
            <person name="Julien R."/>
            <person name="Petit J.M."/>
        </authorList>
    </citation>
    <scope>CATALYTIC ACTIVITY</scope>
    <scope>FUNCTION</scope>
    <scope>TISSUE SPECIFICITY</scope>
    <scope>BIOPHYSICOCHEMICAL PROPERTIES</scope>
</reference>
<reference key="3">
    <citation type="journal article" date="2010" name="J. Cell. Biochem.">
        <title>RNA-mediated gene silencing of FUT1 and FUT2 influences expression and activities of bovine and human fucosylated nucleolin and inhibits cell adhesion and proliferation.</title>
        <authorList>
            <person name="Palumberi D."/>
            <person name="Aldi S."/>
            <person name="Ermini L."/>
            <person name="Ziche M."/>
            <person name="Finetti F."/>
            <person name="Donnini S."/>
            <person name="Rosati F."/>
        </authorList>
    </citation>
    <scope>FUNCTION</scope>
</reference>
<feature type="chain" id="PRO_0000149106" description="Galactoside alpha-(1,2)-fucosyltransferase 2">
    <location>
        <begin position="1"/>
        <end position="344"/>
    </location>
</feature>
<feature type="topological domain" description="Cytoplasmic" evidence="5">
    <location>
        <begin position="1"/>
        <end position="7"/>
    </location>
</feature>
<feature type="transmembrane region" description="Helical; Signal-anchor for type II membrane protein" evidence="5">
    <location>
        <begin position="8"/>
        <end position="28"/>
    </location>
</feature>
<feature type="topological domain" description="Lumenal" evidence="5">
    <location>
        <begin position="29"/>
        <end position="344"/>
    </location>
</feature>
<feature type="glycosylation site" description="N-linked (GlcNAc...) asparagine" evidence="5">
    <location>
        <position position="189"/>
    </location>
</feature>
<feature type="glycosylation site" description="N-linked (GlcNAc...) asparagine" evidence="5">
    <location>
        <position position="255"/>
    </location>
</feature>
<feature type="glycosylation site" description="N-linked (GlcNAc...) asparagine" evidence="5">
    <location>
        <position position="283"/>
    </location>
</feature>
<feature type="glycosylation site" description="N-linked (GlcNAc...) asparagine" evidence="5">
    <location>
        <position position="309"/>
    </location>
</feature>
<accession>Q28113</accession>
<gene>
    <name evidence="2" type="primary">FUT2</name>
</gene>
<protein>
    <recommendedName>
        <fullName evidence="2">Galactoside alpha-(1,2)-fucosyltransferase 2</fullName>
    </recommendedName>
    <alternativeName>
        <fullName>Alpha(1,2)FT 2</fullName>
    </alternativeName>
    <alternativeName>
        <fullName>Fucosyltransferase 2</fullName>
    </alternativeName>
    <alternativeName>
        <fullName>GDP-L-fucose:beta-D-galactoside 2-alpha-L-fucosyltransferase 2</fullName>
    </alternativeName>
    <alternativeName>
        <fullName>Secretor factor</fullName>
        <shortName evidence="8">Se</shortName>
    </alternativeName>
    <alternativeName>
        <fullName evidence="2">Type 1 galactoside alpha-(1,2)-fucosyltransferase FUT2</fullName>
        <ecNumber evidence="4">2.4.1.69</ecNumber>
    </alternativeName>
    <alternativeName>
        <fullName evidence="2">Type 2 galactoside alpha-(1,2)-fucosyltransferase FUT2</fullName>
        <ecNumber evidence="4">2.4.1.344</ecNumber>
    </alternativeName>
</protein>